<comment type="function">
    <text evidence="1">Aquaporins facilitate the transport of water and small neutral solutes across cell membranes.</text>
</comment>
<comment type="subcellular location">
    <subcellularLocation>
        <location evidence="6">Membrane</location>
        <topology evidence="6">Multi-pass membrane protein</topology>
    </subcellularLocation>
</comment>
<comment type="domain">
    <text>Aquaporins contain two tandem repeats each containing three membrane-spanning domains and a pore-forming loop with the signature motif Asn-Pro-Ala (NPA).</text>
</comment>
<comment type="similarity">
    <text evidence="6">Belongs to the MIP/aquaporin (TC 1.A.8) family. NIP (TC 1.A.8.12) subfamily.</text>
</comment>
<evidence type="ECO:0000250" key="1"/>
<evidence type="ECO:0000250" key="2">
    <source>
        <dbReference type="UniProtKB" id="P43286"/>
    </source>
</evidence>
<evidence type="ECO:0000250" key="3">
    <source>
        <dbReference type="UniProtKB" id="P61837"/>
    </source>
</evidence>
<evidence type="ECO:0000255" key="4"/>
<evidence type="ECO:0000256" key="5">
    <source>
        <dbReference type="SAM" id="MobiDB-lite"/>
    </source>
</evidence>
<evidence type="ECO:0000305" key="6"/>
<reference key="1">
    <citation type="journal article" date="1998" name="DNA Res.">
        <title>Structural analysis of Arabidopsis thaliana chromosome 5. VII. Sequence features of the regions of 1,013,767 bp covered by sixteen physically assigned P1 and TAC clones.</title>
        <authorList>
            <person name="Nakamura Y."/>
            <person name="Sato S."/>
            <person name="Asamizu E."/>
            <person name="Kaneko T."/>
            <person name="Kotani H."/>
            <person name="Miyajima N."/>
            <person name="Tabata S."/>
        </authorList>
    </citation>
    <scope>NUCLEOTIDE SEQUENCE [LARGE SCALE GENOMIC DNA]</scope>
    <source>
        <strain>cv. Columbia</strain>
    </source>
</reference>
<reference key="2">
    <citation type="journal article" date="2017" name="Plant J.">
        <title>Araport11: a complete reannotation of the Arabidopsis thaliana reference genome.</title>
        <authorList>
            <person name="Cheng C.Y."/>
            <person name="Krishnakumar V."/>
            <person name="Chan A.P."/>
            <person name="Thibaud-Nissen F."/>
            <person name="Schobel S."/>
            <person name="Town C.D."/>
        </authorList>
    </citation>
    <scope>GENOME REANNOTATION</scope>
    <source>
        <strain>cv. Columbia</strain>
    </source>
</reference>
<reference key="3">
    <citation type="submission" date="2000-03" db="EMBL/GenBank/DDBJ databases">
        <title>Functional characterisation of Arabidopsis thaliana aquaglyceroporins.</title>
        <authorList>
            <person name="Weig A.R."/>
            <person name="Jakob C.U."/>
        </authorList>
    </citation>
    <scope>NUCLEOTIDE SEQUENCE [MRNA] OF 100-261</scope>
</reference>
<reference key="4">
    <citation type="journal article" date="2002" name="Genome Biol.">
        <title>From genome to function: the Arabidopsis aquaporins.</title>
        <authorList>
            <person name="Quigley F."/>
            <person name="Rosenberg J.M."/>
            <person name="Shachar-Hill Y."/>
            <person name="Bohnert H.J."/>
        </authorList>
    </citation>
    <scope>NOMENCLATURE</scope>
</reference>
<dbReference type="EMBL" id="AB016873">
    <property type="protein sequence ID" value="BAB10361.1"/>
    <property type="molecule type" value="Genomic_DNA"/>
</dbReference>
<dbReference type="EMBL" id="CP002688">
    <property type="protein sequence ID" value="AED94236.1"/>
    <property type="molecule type" value="Genomic_DNA"/>
</dbReference>
<dbReference type="EMBL" id="AJ276476">
    <property type="protein sequence ID" value="CAC81708.1"/>
    <property type="molecule type" value="mRNA"/>
</dbReference>
<dbReference type="RefSeq" id="NP_198598.1">
    <property type="nucleotide sequence ID" value="NM_123141.2"/>
</dbReference>
<dbReference type="SMR" id="Q8W036"/>
<dbReference type="FunCoup" id="Q8W036">
    <property type="interactions" value="45"/>
</dbReference>
<dbReference type="STRING" id="3702.Q8W036"/>
<dbReference type="iPTMnet" id="Q8W036"/>
<dbReference type="PaxDb" id="3702-AT5G37820.1"/>
<dbReference type="ProteomicsDB" id="251154"/>
<dbReference type="EnsemblPlants" id="AT5G37820.1">
    <property type="protein sequence ID" value="AT5G37820.1"/>
    <property type="gene ID" value="AT5G37820"/>
</dbReference>
<dbReference type="GeneID" id="833760"/>
<dbReference type="Gramene" id="AT5G37820.1">
    <property type="protein sequence ID" value="AT5G37820.1"/>
    <property type="gene ID" value="AT5G37820"/>
</dbReference>
<dbReference type="KEGG" id="ath:AT5G37820"/>
<dbReference type="Araport" id="AT5G37820"/>
<dbReference type="TAIR" id="AT5G37820">
    <property type="gene designation" value="NIP4"/>
</dbReference>
<dbReference type="eggNOG" id="KOG0223">
    <property type="taxonomic scope" value="Eukaryota"/>
</dbReference>
<dbReference type="HOGENOM" id="CLU_020019_3_1_1"/>
<dbReference type="InParanoid" id="Q8W036"/>
<dbReference type="OMA" id="FTIFRRY"/>
<dbReference type="OrthoDB" id="3222at2759"/>
<dbReference type="PhylomeDB" id="Q8W036"/>
<dbReference type="PRO" id="PR:Q8W036"/>
<dbReference type="Proteomes" id="UP000006548">
    <property type="component" value="Chromosome 5"/>
</dbReference>
<dbReference type="ExpressionAtlas" id="Q8W036">
    <property type="expression patterns" value="baseline"/>
</dbReference>
<dbReference type="GO" id="GO:0016020">
    <property type="term" value="C:membrane"/>
    <property type="evidence" value="ECO:0007669"/>
    <property type="project" value="UniProtKB-SubCell"/>
</dbReference>
<dbReference type="GO" id="GO:0015267">
    <property type="term" value="F:channel activity"/>
    <property type="evidence" value="ECO:0007669"/>
    <property type="project" value="InterPro"/>
</dbReference>
<dbReference type="CDD" id="cd00333">
    <property type="entry name" value="MIP"/>
    <property type="match status" value="1"/>
</dbReference>
<dbReference type="Gene3D" id="1.20.1080.10">
    <property type="entry name" value="Glycerol uptake facilitator protein"/>
    <property type="match status" value="1"/>
</dbReference>
<dbReference type="InterPro" id="IPR023271">
    <property type="entry name" value="Aquaporin-like"/>
</dbReference>
<dbReference type="InterPro" id="IPR034294">
    <property type="entry name" value="Aquaporin_transptr"/>
</dbReference>
<dbReference type="InterPro" id="IPR000425">
    <property type="entry name" value="MIP"/>
</dbReference>
<dbReference type="InterPro" id="IPR022357">
    <property type="entry name" value="MIP_CS"/>
</dbReference>
<dbReference type="NCBIfam" id="TIGR00861">
    <property type="entry name" value="MIP"/>
    <property type="match status" value="1"/>
</dbReference>
<dbReference type="PANTHER" id="PTHR45724">
    <property type="entry name" value="AQUAPORIN NIP2-1"/>
    <property type="match status" value="1"/>
</dbReference>
<dbReference type="PANTHER" id="PTHR45724:SF56">
    <property type="entry name" value="AQUAPORIN NIP4-2-RELATED"/>
    <property type="match status" value="1"/>
</dbReference>
<dbReference type="Pfam" id="PF00230">
    <property type="entry name" value="MIP"/>
    <property type="match status" value="1"/>
</dbReference>
<dbReference type="PRINTS" id="PR00783">
    <property type="entry name" value="MINTRINSICP"/>
</dbReference>
<dbReference type="SUPFAM" id="SSF81338">
    <property type="entry name" value="Aquaporin-like"/>
    <property type="match status" value="1"/>
</dbReference>
<dbReference type="PROSITE" id="PS00221">
    <property type="entry name" value="MIP"/>
    <property type="match status" value="1"/>
</dbReference>
<accession>Q8W036</accession>
<accession>Q9FIZ8</accession>
<feature type="chain" id="PRO_0000064067" description="Probable aquaporin NIP4-2">
    <location>
        <begin position="1"/>
        <end position="283"/>
    </location>
</feature>
<feature type="transmembrane region" description="Helical; Name=1" evidence="4">
    <location>
        <begin position="51"/>
        <end position="71"/>
    </location>
</feature>
<feature type="transmembrane region" description="Helical; Name=2" evidence="4">
    <location>
        <begin position="77"/>
        <end position="97"/>
    </location>
</feature>
<feature type="transmembrane region" description="Helical; Name=3" evidence="4">
    <location>
        <begin position="120"/>
        <end position="140"/>
    </location>
</feature>
<feature type="transmembrane region" description="Helical; Name=4" evidence="4">
    <location>
        <begin position="161"/>
        <end position="181"/>
    </location>
</feature>
<feature type="transmembrane region" description="Helical; Name=5" evidence="4">
    <location>
        <begin position="189"/>
        <end position="209"/>
    </location>
</feature>
<feature type="transmembrane region" description="Helical; Name=6" evidence="4">
    <location>
        <begin position="231"/>
        <end position="251"/>
    </location>
</feature>
<feature type="region of interest" description="Disordered" evidence="5">
    <location>
        <begin position="1"/>
        <end position="23"/>
    </location>
</feature>
<feature type="short sequence motif" description="NPA 1">
    <location>
        <begin position="102"/>
        <end position="104"/>
    </location>
</feature>
<feature type="short sequence motif" description="NPA 2">
    <location>
        <begin position="214"/>
        <end position="216"/>
    </location>
</feature>
<feature type="compositionally biased region" description="Basic and acidic residues" evidence="5">
    <location>
        <begin position="1"/>
        <end position="21"/>
    </location>
</feature>
<feature type="modified residue" description="N-acetylmethionine" evidence="3">
    <location>
        <position position="1"/>
    </location>
</feature>
<feature type="modified residue" description="Phosphoserine" evidence="2">
    <location>
        <position position="267"/>
    </location>
</feature>
<keyword id="KW-0007">Acetylation</keyword>
<keyword id="KW-0472">Membrane</keyword>
<keyword id="KW-0597">Phosphoprotein</keyword>
<keyword id="KW-1185">Reference proteome</keyword>
<keyword id="KW-0677">Repeat</keyword>
<keyword id="KW-0812">Transmembrane</keyword>
<keyword id="KW-1133">Transmembrane helix</keyword>
<keyword id="KW-0813">Transport</keyword>
<sequence>MTSHGEEIEDEQISRIEKGNCKDSQGGMETAICSSPSIVCLTQKLIAEMIGTYFIIFSGCGVVVVNVLYGGTITFPGICVTWGLIVMVMIYSTGHISGAHFNPAVTVTFAVFRRFPWYQVPLYIGAQLTGSLLASLTLRLMFNVTPKAFFGTTPTDSSGQALVAEIIISFLLMFVISGVATDSRATGELAGIAVGMTIILNVFVAGPISGASMNPARSLGPAIVMGRYKGIWVYIVGPFVGIFAGGFVYNFMRFTDKPLRELTKSASFLRSVAQKDNASKSDG</sequence>
<organism>
    <name type="scientific">Arabidopsis thaliana</name>
    <name type="common">Mouse-ear cress</name>
    <dbReference type="NCBI Taxonomy" id="3702"/>
    <lineage>
        <taxon>Eukaryota</taxon>
        <taxon>Viridiplantae</taxon>
        <taxon>Streptophyta</taxon>
        <taxon>Embryophyta</taxon>
        <taxon>Tracheophyta</taxon>
        <taxon>Spermatophyta</taxon>
        <taxon>Magnoliopsida</taxon>
        <taxon>eudicotyledons</taxon>
        <taxon>Gunneridae</taxon>
        <taxon>Pentapetalae</taxon>
        <taxon>rosids</taxon>
        <taxon>malvids</taxon>
        <taxon>Brassicales</taxon>
        <taxon>Brassicaceae</taxon>
        <taxon>Camelineae</taxon>
        <taxon>Arabidopsis</taxon>
    </lineage>
</organism>
<gene>
    <name type="primary">NIP4-2</name>
    <name type="synonym">NLM5</name>
    <name type="ordered locus">At5g37820</name>
    <name type="ORF">K22F20.60</name>
</gene>
<name>NIP42_ARATH</name>
<protein>
    <recommendedName>
        <fullName>Probable aquaporin NIP4-2</fullName>
    </recommendedName>
    <alternativeName>
        <fullName>NOD26-like intrinsic protein 4-2</fullName>
        <shortName>AtNIP4;2</shortName>
    </alternativeName>
    <alternativeName>
        <fullName>Nodulin-26-like major intrinsic protein 5</fullName>
        <shortName>NodLikeMip5</shortName>
        <shortName>Protein NLM5</shortName>
    </alternativeName>
</protein>
<proteinExistence type="evidence at transcript level"/>